<organism>
    <name type="scientific">Epidermophyton floccosum</name>
    <dbReference type="NCBI Taxonomy" id="34391"/>
    <lineage>
        <taxon>Eukaryota</taxon>
        <taxon>Fungi</taxon>
        <taxon>Dikarya</taxon>
        <taxon>Ascomycota</taxon>
        <taxon>Pezizomycotina</taxon>
        <taxon>Eurotiomycetes</taxon>
        <taxon>Eurotiomycetidae</taxon>
        <taxon>Onygenales</taxon>
        <taxon>Arthrodermataceae</taxon>
        <taxon>Epidermophyton</taxon>
    </lineage>
</organism>
<proteinExistence type="inferred from homology"/>
<gene>
    <name type="primary">cob</name>
    <name type="synonym">cytB</name>
</gene>
<reference key="1">
    <citation type="submission" date="2005-01" db="EMBL/GenBank/DDBJ databases">
        <title>The complete DNA sequence of the mitochondrial genome of the Epidermophyton floccosum and phylogenetic considerations.</title>
        <authorList>
            <person name="Tambor J.H.M."/>
            <person name="Guedes R.F."/>
            <person name="Nobrega M.P."/>
            <person name="Nobrega F.G."/>
        </authorList>
    </citation>
    <scope>NUCLEOTIDE SEQUENCE [LARGE SCALE GENOMIC DNA]</scope>
    <source>
        <strain>ATCC 26072</strain>
    </source>
</reference>
<accession>Q3ZEG3</accession>
<geneLocation type="mitochondrion"/>
<name>CYB_EPIFL</name>
<keyword id="KW-0249">Electron transport</keyword>
<keyword id="KW-0349">Heme</keyword>
<keyword id="KW-0408">Iron</keyword>
<keyword id="KW-0472">Membrane</keyword>
<keyword id="KW-0479">Metal-binding</keyword>
<keyword id="KW-0496">Mitochondrion</keyword>
<keyword id="KW-0999">Mitochondrion inner membrane</keyword>
<keyword id="KW-0679">Respiratory chain</keyword>
<keyword id="KW-0812">Transmembrane</keyword>
<keyword id="KW-1133">Transmembrane helix</keyword>
<keyword id="KW-0813">Transport</keyword>
<keyword id="KW-0830">Ubiquinone</keyword>
<protein>
    <recommendedName>
        <fullName>Cytochrome b</fullName>
    </recommendedName>
    <alternativeName>
        <fullName>Complex III subunit 3</fullName>
    </alternativeName>
    <alternativeName>
        <fullName>Complex III subunit III</fullName>
    </alternativeName>
    <alternativeName>
        <fullName>Cytochrome b-c1 complex subunit 3</fullName>
    </alternativeName>
    <alternativeName>
        <fullName>Ubiquinol-cytochrome-c reductase complex cytochrome b subunit</fullName>
    </alternativeName>
</protein>
<feature type="chain" id="PRO_0000061744" description="Cytochrome b">
    <location>
        <begin position="1"/>
        <end position="400"/>
    </location>
</feature>
<feature type="transmembrane region" description="Helical" evidence="3">
    <location>
        <begin position="32"/>
        <end position="52"/>
    </location>
</feature>
<feature type="transmembrane region" description="Helical" evidence="3">
    <location>
        <begin position="76"/>
        <end position="98"/>
    </location>
</feature>
<feature type="transmembrane region" description="Helical" evidence="3">
    <location>
        <begin position="113"/>
        <end position="133"/>
    </location>
</feature>
<feature type="transmembrane region" description="Helical" evidence="3">
    <location>
        <begin position="179"/>
        <end position="199"/>
    </location>
</feature>
<feature type="transmembrane region" description="Helical" evidence="3">
    <location>
        <begin position="226"/>
        <end position="246"/>
    </location>
</feature>
<feature type="transmembrane region" description="Helical" evidence="3">
    <location>
        <begin position="290"/>
        <end position="310"/>
    </location>
</feature>
<feature type="transmembrane region" description="Helical" evidence="3">
    <location>
        <begin position="322"/>
        <end position="342"/>
    </location>
</feature>
<feature type="transmembrane region" description="Helical" evidence="3">
    <location>
        <begin position="349"/>
        <end position="369"/>
    </location>
</feature>
<feature type="binding site" description="axial binding residue" evidence="5">
    <location>
        <position position="82"/>
    </location>
    <ligand>
        <name>heme b</name>
        <dbReference type="ChEBI" id="CHEBI:60344"/>
        <label>b562</label>
    </ligand>
    <ligandPart>
        <name>Fe</name>
        <dbReference type="ChEBI" id="CHEBI:18248"/>
    </ligandPart>
</feature>
<feature type="binding site" description="axial binding residue" evidence="5">
    <location>
        <position position="96"/>
    </location>
    <ligand>
        <name>heme b</name>
        <dbReference type="ChEBI" id="CHEBI:60344"/>
        <label>b566</label>
    </ligand>
    <ligandPart>
        <name>Fe</name>
        <dbReference type="ChEBI" id="CHEBI:18248"/>
    </ligandPart>
</feature>
<feature type="binding site" description="axial binding residue" evidence="5">
    <location>
        <position position="183"/>
    </location>
    <ligand>
        <name>heme b</name>
        <dbReference type="ChEBI" id="CHEBI:60344"/>
        <label>b562</label>
    </ligand>
    <ligandPart>
        <name>Fe</name>
        <dbReference type="ChEBI" id="CHEBI:18248"/>
    </ligandPart>
</feature>
<feature type="binding site" description="axial binding residue" evidence="5">
    <location>
        <position position="197"/>
    </location>
    <ligand>
        <name>heme b</name>
        <dbReference type="ChEBI" id="CHEBI:60344"/>
        <label>b566</label>
    </ligand>
    <ligandPart>
        <name>Fe</name>
        <dbReference type="ChEBI" id="CHEBI:18248"/>
    </ligandPart>
</feature>
<feature type="binding site" evidence="2">
    <location>
        <position position="202"/>
    </location>
    <ligand>
        <name>a ubiquinone</name>
        <dbReference type="ChEBI" id="CHEBI:16389"/>
    </ligand>
</feature>
<evidence type="ECO:0000250" key="1"/>
<evidence type="ECO:0000250" key="2">
    <source>
        <dbReference type="UniProtKB" id="P00157"/>
    </source>
</evidence>
<evidence type="ECO:0000250" key="3">
    <source>
        <dbReference type="UniProtKB" id="P00163"/>
    </source>
</evidence>
<evidence type="ECO:0000255" key="4">
    <source>
        <dbReference type="PROSITE-ProRule" id="PRU00967"/>
    </source>
</evidence>
<evidence type="ECO:0000255" key="5">
    <source>
        <dbReference type="PROSITE-ProRule" id="PRU00968"/>
    </source>
</evidence>
<dbReference type="EMBL" id="AY916130">
    <property type="protein sequence ID" value="AAW78240.1"/>
    <property type="molecule type" value="Genomic_DNA"/>
</dbReference>
<dbReference type="RefSeq" id="YP_313634.1">
    <property type="nucleotide sequence ID" value="NC_007394.1"/>
</dbReference>
<dbReference type="SMR" id="Q3ZEG3"/>
<dbReference type="GeneID" id="3666183"/>
<dbReference type="GO" id="GO:0005743">
    <property type="term" value="C:mitochondrial inner membrane"/>
    <property type="evidence" value="ECO:0007669"/>
    <property type="project" value="UniProtKB-SubCell"/>
</dbReference>
<dbReference type="GO" id="GO:0045275">
    <property type="term" value="C:respiratory chain complex III"/>
    <property type="evidence" value="ECO:0007669"/>
    <property type="project" value="InterPro"/>
</dbReference>
<dbReference type="GO" id="GO:0046872">
    <property type="term" value="F:metal ion binding"/>
    <property type="evidence" value="ECO:0007669"/>
    <property type="project" value="UniProtKB-KW"/>
</dbReference>
<dbReference type="GO" id="GO:0008121">
    <property type="term" value="F:ubiquinol-cytochrome-c reductase activity"/>
    <property type="evidence" value="ECO:0007669"/>
    <property type="project" value="InterPro"/>
</dbReference>
<dbReference type="GO" id="GO:0006122">
    <property type="term" value="P:mitochondrial electron transport, ubiquinol to cytochrome c"/>
    <property type="evidence" value="ECO:0007669"/>
    <property type="project" value="TreeGrafter"/>
</dbReference>
<dbReference type="CDD" id="cd00290">
    <property type="entry name" value="cytochrome_b_C"/>
    <property type="match status" value="1"/>
</dbReference>
<dbReference type="CDD" id="cd00284">
    <property type="entry name" value="Cytochrome_b_N"/>
    <property type="match status" value="1"/>
</dbReference>
<dbReference type="FunFam" id="1.20.810.10:FF:000002">
    <property type="entry name" value="Cytochrome b"/>
    <property type="match status" value="1"/>
</dbReference>
<dbReference type="Gene3D" id="1.20.810.10">
    <property type="entry name" value="Cytochrome Bc1 Complex, Chain C"/>
    <property type="match status" value="1"/>
</dbReference>
<dbReference type="InterPro" id="IPR005798">
    <property type="entry name" value="Cyt_b/b6_C"/>
</dbReference>
<dbReference type="InterPro" id="IPR036150">
    <property type="entry name" value="Cyt_b/b6_C_sf"/>
</dbReference>
<dbReference type="InterPro" id="IPR005797">
    <property type="entry name" value="Cyt_b/b6_N"/>
</dbReference>
<dbReference type="InterPro" id="IPR027387">
    <property type="entry name" value="Cytb/b6-like_sf"/>
</dbReference>
<dbReference type="InterPro" id="IPR030689">
    <property type="entry name" value="Cytochrome_b"/>
</dbReference>
<dbReference type="InterPro" id="IPR048260">
    <property type="entry name" value="Cytochrome_b_C_euk/bac"/>
</dbReference>
<dbReference type="InterPro" id="IPR048259">
    <property type="entry name" value="Cytochrome_b_N_euk/bac"/>
</dbReference>
<dbReference type="InterPro" id="IPR016174">
    <property type="entry name" value="Di-haem_cyt_TM"/>
</dbReference>
<dbReference type="PANTHER" id="PTHR19271">
    <property type="entry name" value="CYTOCHROME B"/>
    <property type="match status" value="1"/>
</dbReference>
<dbReference type="PANTHER" id="PTHR19271:SF16">
    <property type="entry name" value="CYTOCHROME B"/>
    <property type="match status" value="1"/>
</dbReference>
<dbReference type="Pfam" id="PF00032">
    <property type="entry name" value="Cytochrom_B_C"/>
    <property type="match status" value="1"/>
</dbReference>
<dbReference type="Pfam" id="PF00033">
    <property type="entry name" value="Cytochrome_B"/>
    <property type="match status" value="1"/>
</dbReference>
<dbReference type="PIRSF" id="PIRSF038885">
    <property type="entry name" value="COB"/>
    <property type="match status" value="1"/>
</dbReference>
<dbReference type="SUPFAM" id="SSF81648">
    <property type="entry name" value="a domain/subunit of cytochrome bc1 complex (Ubiquinol-cytochrome c reductase)"/>
    <property type="match status" value="1"/>
</dbReference>
<dbReference type="SUPFAM" id="SSF81342">
    <property type="entry name" value="Transmembrane di-heme cytochromes"/>
    <property type="match status" value="1"/>
</dbReference>
<dbReference type="PROSITE" id="PS51003">
    <property type="entry name" value="CYTB_CTER"/>
    <property type="match status" value="1"/>
</dbReference>
<dbReference type="PROSITE" id="PS51002">
    <property type="entry name" value="CYTB_NTER"/>
    <property type="match status" value="1"/>
</dbReference>
<comment type="function">
    <text evidence="3">Component of the ubiquinol-cytochrome c reductase complex (complex III or cytochrome b-c1 complex) that is part of the mitochondrial respiratory chain. The b-c1 complex mediates electron transfer from ubiquinol to cytochrome c. Contributes to the generation of a proton gradient across the mitochondrial membrane that is then used for ATP synthesis.</text>
</comment>
<comment type="cofactor">
    <cofactor evidence="3">
        <name>heme b</name>
        <dbReference type="ChEBI" id="CHEBI:60344"/>
    </cofactor>
    <text evidence="3">Binds 2 heme b groups non-covalently.</text>
</comment>
<comment type="subunit">
    <text evidence="3">Fungal cytochrome b-c1 complex contains 10 subunits; 3 respiratory subunits, 2 core proteins and 5 low-molecular weight proteins. Cytochrome b-c1 complex is a homodimer.</text>
</comment>
<comment type="subcellular location">
    <subcellularLocation>
        <location evidence="3">Mitochondrion inner membrane</location>
        <topology evidence="3">Multi-pass membrane protein</topology>
    </subcellularLocation>
</comment>
<comment type="miscellaneous">
    <text evidence="1">Heme 1 (or BL or b562) is low-potential and absorbs at about 562 nm, and heme 2 (or BH or b566) is high-potential and absorbs at about 566 nm.</text>
</comment>
<comment type="similarity">
    <text evidence="4 5">Belongs to the cytochrome b family.</text>
</comment>
<comment type="caution">
    <text evidence="3">The protein contains only eight transmembrane helices, not nine as predicted by bioinformatics tools.</text>
</comment>
<sequence>MRIFKSHPLLKLVNSYIIDSPQPTNLSYLWNFGSLLALCLGIQIVTGVTLAMHYTPNVLDAFDSIEHIMRDVNNGWLIRYLHSNTASAFFFLVYLHIGRGIYYGSYQGPRTLTWSIGTIIFIAMVATAFLGYVLPYGQMSLWGATVITNLLSAIPWIGQDLVEFIWGGFSVNNATLNRFFSLHFLLPFILAALVLMHLIALHDTVGSSNPLGISGNYDRLPFAPYYLFKDLVTIFLFMLILSIFVFFMPNALGDCENYVMANPMQTPPAIVPEWYLLPFYAILRSIPDKAVGVVLMFGAILIILALPYLDKSILRGIQYRPLSKVAFYIFVANFLVLMQLGAKHVEDPFIVFGQLSTILYFSYFIIIIPLLSLIENELLDIATNYSSNKTLKNRKSLLSE</sequence>